<evidence type="ECO:0000256" key="1">
    <source>
        <dbReference type="SAM" id="MobiDB-lite"/>
    </source>
</evidence>
<evidence type="ECO:0000269" key="2">
    <source>
    </source>
</evidence>
<evidence type="ECO:0000269" key="3">
    <source>
    </source>
</evidence>
<evidence type="ECO:0000269" key="4">
    <source>
    </source>
</evidence>
<evidence type="ECO:0000269" key="5">
    <source>
    </source>
</evidence>
<evidence type="ECO:0000305" key="6"/>
<evidence type="ECO:0007744" key="7">
    <source>
    </source>
</evidence>
<evidence type="ECO:0007744" key="8">
    <source>
    </source>
</evidence>
<evidence type="ECO:0007744" key="9">
    <source>
    </source>
</evidence>
<evidence type="ECO:0007744" key="10">
    <source>
    </source>
</evidence>
<protein>
    <recommendedName>
        <fullName>Protein KRI1</fullName>
    </recommendedName>
    <alternativeName>
        <fullName>KRR1-interacting protein 1</fullName>
    </alternativeName>
</protein>
<sequence length="591" mass="68654">MPRKKSAAKRAREQAKKEAAVPATDTATIKTSETSATTVKPAIEASKSYVPSEDEEEDEEEEEEEDDYGELITDEVENGINQVLDAIKNNKTDKLLDPKVKFFEDPESAAAKLANREGKHKPIYLKDYHRMNILSGDALKEDDEEYEHATVDGKQSFVSQQREEKTQLLNEIKSAFSDEENEESSGDEDDGFLKKKEPSTKKEGKNLPDPTVNEENFLEEFVNQQAWIPKKGDKVISLDLNNNEEDDEEFEDAAEKFENAYNFRYEDPNAAEIISYARSQATLRRSDDSSRRRKREEKRKIKEQIKAEKETALQKKKTKKLNKLTDILEQLTKEYGAEINADMVKKITDTLLKNDFKEEEWDNVVAELFNEEFYQQEGKPTWNEDDEIMGDFYADADGDDQTEEGEVEKEQKEEDEEEGPKRKKSKKEEKLQKKKEKRKVNELVENALEQNKLALIEEVEKEEEERKSRSRTKEEQDLKFRYREVSPESFGLTAREIFAADDTDLNEFIGLKKFAPYRSKELRAKDKRKVMKARRLREWRKKTFKNENGLAPVEAEAGEKDEDTILIPVEKASKSKHKRGHSHKHKGHQKK</sequence>
<dbReference type="EMBL" id="Z46259">
    <property type="protein sequence ID" value="CAA86387.1"/>
    <property type="molecule type" value="Genomic_DNA"/>
</dbReference>
<dbReference type="EMBL" id="Z71584">
    <property type="protein sequence ID" value="CAA96237.1"/>
    <property type="molecule type" value="Genomic_DNA"/>
</dbReference>
<dbReference type="EMBL" id="BK006947">
    <property type="protein sequence ID" value="DAA10253.1"/>
    <property type="molecule type" value="Genomic_DNA"/>
</dbReference>
<dbReference type="PIR" id="S51303">
    <property type="entry name" value="S51303"/>
</dbReference>
<dbReference type="RefSeq" id="NP_014091.1">
    <property type="nucleotide sequence ID" value="NM_001183146.1"/>
</dbReference>
<dbReference type="SMR" id="P42846"/>
<dbReference type="BioGRID" id="35531">
    <property type="interactions" value="345"/>
</dbReference>
<dbReference type="DIP" id="DIP-4073N"/>
<dbReference type="FunCoup" id="P42846">
    <property type="interactions" value="794"/>
</dbReference>
<dbReference type="IntAct" id="P42846">
    <property type="interactions" value="52"/>
</dbReference>
<dbReference type="MINT" id="P42846"/>
<dbReference type="STRING" id="4932.YNL308C"/>
<dbReference type="iPTMnet" id="P42846"/>
<dbReference type="PaxDb" id="4932-YNL308C"/>
<dbReference type="PeptideAtlas" id="P42846"/>
<dbReference type="EnsemblFungi" id="YNL308C_mRNA">
    <property type="protein sequence ID" value="YNL308C"/>
    <property type="gene ID" value="YNL308C"/>
</dbReference>
<dbReference type="GeneID" id="855408"/>
<dbReference type="KEGG" id="sce:YNL308C"/>
<dbReference type="AGR" id="SGD:S000005252"/>
<dbReference type="SGD" id="S000005252">
    <property type="gene designation" value="KRI1"/>
</dbReference>
<dbReference type="VEuPathDB" id="FungiDB:YNL308C"/>
<dbReference type="eggNOG" id="KOG2409">
    <property type="taxonomic scope" value="Eukaryota"/>
</dbReference>
<dbReference type="GeneTree" id="ENSGT00390000005605"/>
<dbReference type="HOGENOM" id="CLU_009647_3_0_1"/>
<dbReference type="InParanoid" id="P42846"/>
<dbReference type="OMA" id="WDNYDPR"/>
<dbReference type="OrthoDB" id="10252032at2759"/>
<dbReference type="BioCyc" id="YEAST:G3O-33295-MONOMER"/>
<dbReference type="BioGRID-ORCS" id="855408">
    <property type="hits" value="2 hits in 10 CRISPR screens"/>
</dbReference>
<dbReference type="CD-CODE" id="BDAE0F88">
    <property type="entry name" value="Nucleolus"/>
</dbReference>
<dbReference type="PRO" id="PR:P42846"/>
<dbReference type="Proteomes" id="UP000002311">
    <property type="component" value="Chromosome XIV"/>
</dbReference>
<dbReference type="RNAct" id="P42846">
    <property type="molecule type" value="protein"/>
</dbReference>
<dbReference type="GO" id="GO:0030686">
    <property type="term" value="C:90S preribosome"/>
    <property type="evidence" value="ECO:0000314"/>
    <property type="project" value="SGD"/>
</dbReference>
<dbReference type="GO" id="GO:0005730">
    <property type="term" value="C:nucleolus"/>
    <property type="evidence" value="ECO:0000314"/>
    <property type="project" value="SGD"/>
</dbReference>
<dbReference type="GO" id="GO:0000447">
    <property type="term" value="P:endonucleolytic cleavage in ITS1 to separate SSU-rRNA from 5.8S rRNA and LSU-rRNA from tricistronic rRNA transcript (SSU-rRNA, 5.8S rRNA, LSU-rRNA)"/>
    <property type="evidence" value="ECO:0000315"/>
    <property type="project" value="SGD"/>
</dbReference>
<dbReference type="InterPro" id="IPR018034">
    <property type="entry name" value="Kri1"/>
</dbReference>
<dbReference type="InterPro" id="IPR024626">
    <property type="entry name" value="Kri1-like_C"/>
</dbReference>
<dbReference type="PANTHER" id="PTHR14490:SF5">
    <property type="entry name" value="PROTEIN KRI1 HOMOLOG"/>
    <property type="match status" value="1"/>
</dbReference>
<dbReference type="PANTHER" id="PTHR14490">
    <property type="entry name" value="ZINC FINGER, ZZ TYPE"/>
    <property type="match status" value="1"/>
</dbReference>
<dbReference type="Pfam" id="PF05178">
    <property type="entry name" value="Kri1"/>
    <property type="match status" value="1"/>
</dbReference>
<dbReference type="Pfam" id="PF12936">
    <property type="entry name" value="Kri1_C"/>
    <property type="match status" value="1"/>
</dbReference>
<reference key="1">
    <citation type="journal article" date="1995" name="Yeast">
        <title>Sequencing analysis of a 24.7 kb fragment of yeast chromosome XIV identifies six known genes, a new member of the hexose transporter family and ten new open reading frames.</title>
        <authorList>
            <person name="Maftahi M."/>
            <person name="Nicaud J.-M."/>
            <person name="Levesque H."/>
            <person name="Gaillardin C."/>
        </authorList>
    </citation>
    <scope>NUCLEOTIDE SEQUENCE [GENOMIC DNA]</scope>
    <source>
        <strain>S288c / FY1676</strain>
    </source>
</reference>
<reference key="2">
    <citation type="journal article" date="1997" name="Nature">
        <title>The nucleotide sequence of Saccharomyces cerevisiae chromosome XIV and its evolutionary implications.</title>
        <authorList>
            <person name="Philippsen P."/>
            <person name="Kleine K."/>
            <person name="Poehlmann R."/>
            <person name="Duesterhoeft A."/>
            <person name="Hamberg K."/>
            <person name="Hegemann J.H."/>
            <person name="Obermaier B."/>
            <person name="Urrestarazu L.A."/>
            <person name="Aert R."/>
            <person name="Albermann K."/>
            <person name="Altmann R."/>
            <person name="Andre B."/>
            <person name="Baladron V."/>
            <person name="Ballesta J.P.G."/>
            <person name="Becam A.-M."/>
            <person name="Beinhauer J.D."/>
            <person name="Boskovic J."/>
            <person name="Buitrago M.J."/>
            <person name="Bussereau F."/>
            <person name="Coster F."/>
            <person name="Crouzet M."/>
            <person name="D'Angelo M."/>
            <person name="Dal Pero F."/>
            <person name="De Antoni A."/>
            <person name="del Rey F."/>
            <person name="Doignon F."/>
            <person name="Domdey H."/>
            <person name="Dubois E."/>
            <person name="Fiedler T.A."/>
            <person name="Fleig U."/>
            <person name="Floeth M."/>
            <person name="Fritz C."/>
            <person name="Gaillardin C."/>
            <person name="Garcia-Cantalejo J.M."/>
            <person name="Glansdorff N."/>
            <person name="Goffeau A."/>
            <person name="Gueldener U."/>
            <person name="Herbert C.J."/>
            <person name="Heumann K."/>
            <person name="Heuss-Neitzel D."/>
            <person name="Hilbert H."/>
            <person name="Hinni K."/>
            <person name="Iraqui Houssaini I."/>
            <person name="Jacquet M."/>
            <person name="Jimenez A."/>
            <person name="Jonniaux J.-L."/>
            <person name="Karpfinger-Hartl L."/>
            <person name="Lanfranchi G."/>
            <person name="Lepingle A."/>
            <person name="Levesque H."/>
            <person name="Lyck R."/>
            <person name="Maftahi M."/>
            <person name="Mallet L."/>
            <person name="Maurer C.T.C."/>
            <person name="Messenguy F."/>
            <person name="Mewes H.-W."/>
            <person name="Moestl D."/>
            <person name="Nasr F."/>
            <person name="Nicaud J.-M."/>
            <person name="Niedenthal R.K."/>
            <person name="Pandolfo D."/>
            <person name="Pierard A."/>
            <person name="Piravandi E."/>
            <person name="Planta R.J."/>
            <person name="Pohl T.M."/>
            <person name="Purnelle B."/>
            <person name="Rebischung C."/>
            <person name="Remacha M.A."/>
            <person name="Revuelta J.L."/>
            <person name="Rinke M."/>
            <person name="Saiz J.E."/>
            <person name="Sartorello F."/>
            <person name="Scherens B."/>
            <person name="Sen-Gupta M."/>
            <person name="Soler-Mira A."/>
            <person name="Urbanus J.H.M."/>
            <person name="Valle G."/>
            <person name="Van Dyck L."/>
            <person name="Verhasselt P."/>
            <person name="Vierendeels F."/>
            <person name="Vissers S."/>
            <person name="Voet M."/>
            <person name="Volckaert G."/>
            <person name="Wach A."/>
            <person name="Wambutt R."/>
            <person name="Wedler H."/>
            <person name="Zollner A."/>
            <person name="Hani J."/>
        </authorList>
    </citation>
    <scope>NUCLEOTIDE SEQUENCE [LARGE SCALE GENOMIC DNA]</scope>
    <source>
        <strain>ATCC 204508 / S288c</strain>
    </source>
</reference>
<reference key="3">
    <citation type="journal article" date="2014" name="G3 (Bethesda)">
        <title>The reference genome sequence of Saccharomyces cerevisiae: Then and now.</title>
        <authorList>
            <person name="Engel S.R."/>
            <person name="Dietrich F.S."/>
            <person name="Fisk D.G."/>
            <person name="Binkley G."/>
            <person name="Balakrishnan R."/>
            <person name="Costanzo M.C."/>
            <person name="Dwight S.S."/>
            <person name="Hitz B.C."/>
            <person name="Karra K."/>
            <person name="Nash R.S."/>
            <person name="Weng S."/>
            <person name="Wong E.D."/>
            <person name="Lloyd P."/>
            <person name="Skrzypek M.S."/>
            <person name="Miyasato S.R."/>
            <person name="Simison M."/>
            <person name="Cherry J.M."/>
        </authorList>
    </citation>
    <scope>GENOME REANNOTATION</scope>
    <source>
        <strain>ATCC 204508 / S288c</strain>
    </source>
</reference>
<reference key="4">
    <citation type="journal article" date="2000" name="Mol. Cell. Biol.">
        <title>Yeast Krr1p physically and functionally interacts with a novel essential Kri1p, and both proteins are required for 40S ribosome biogenesis in the nucleolus.</title>
        <authorList>
            <person name="Sasaki T."/>
            <person name="Toh-e A."/>
            <person name="Kikuchi Y."/>
        </authorList>
    </citation>
    <scope>FUNCTION</scope>
    <scope>INTERACTION WITH KRR1</scope>
    <scope>SUBCELLULAR LOCATION</scope>
</reference>
<reference key="5">
    <citation type="journal article" date="2003" name="Nature">
        <title>Global analysis of protein localization in budding yeast.</title>
        <authorList>
            <person name="Huh W.-K."/>
            <person name="Falvo J.V."/>
            <person name="Gerke L.C."/>
            <person name="Carroll A.S."/>
            <person name="Howson R.W."/>
            <person name="Weissman J.S."/>
            <person name="O'Shea E.K."/>
        </authorList>
    </citation>
    <scope>SUBCELLULAR LOCATION [LARGE SCALE ANALYSIS]</scope>
</reference>
<reference key="6">
    <citation type="journal article" date="2003" name="Nature">
        <title>Global analysis of protein expression in yeast.</title>
        <authorList>
            <person name="Ghaemmaghami S."/>
            <person name="Huh W.-K."/>
            <person name="Bower K."/>
            <person name="Howson R.W."/>
            <person name="Belle A."/>
            <person name="Dephoure N."/>
            <person name="O'Shea E.K."/>
            <person name="Weissman J.S."/>
        </authorList>
    </citation>
    <scope>LEVEL OF PROTEIN EXPRESSION [LARGE SCALE ANALYSIS]</scope>
</reference>
<reference key="7">
    <citation type="journal article" date="2005" name="Mol. Cell. Proteomics">
        <title>Quantitative phosphoproteomics applied to the yeast pheromone signaling pathway.</title>
        <authorList>
            <person name="Gruhler A."/>
            <person name="Olsen J.V."/>
            <person name="Mohammed S."/>
            <person name="Mortensen P."/>
            <person name="Faergeman N.J."/>
            <person name="Mann M."/>
            <person name="Jensen O.N."/>
        </authorList>
    </citation>
    <scope>PHOSPHORYLATION [LARGE SCALE ANALYSIS] AT SER-486</scope>
    <scope>IDENTIFICATION BY MASS SPECTROMETRY [LARGE SCALE ANALYSIS]</scope>
    <source>
        <strain>YAL6B</strain>
    </source>
</reference>
<reference key="8">
    <citation type="journal article" date="2007" name="J. Proteome Res.">
        <title>Large-scale phosphorylation analysis of alpha-factor-arrested Saccharomyces cerevisiae.</title>
        <authorList>
            <person name="Li X."/>
            <person name="Gerber S.A."/>
            <person name="Rudner A.D."/>
            <person name="Beausoleil S.A."/>
            <person name="Haas W."/>
            <person name="Villen J."/>
            <person name="Elias J.E."/>
            <person name="Gygi S.P."/>
        </authorList>
    </citation>
    <scope>PHOSPHORYLATION [LARGE SCALE ANALYSIS] AT SER-177; SER-184; SER-185 AND SER-486</scope>
    <scope>IDENTIFICATION BY MASS SPECTROMETRY [LARGE SCALE ANALYSIS]</scope>
    <source>
        <strain>ADR376</strain>
    </source>
</reference>
<reference key="9">
    <citation type="journal article" date="2008" name="Mol. Cell. Proteomics">
        <title>A multidimensional chromatography technology for in-depth phosphoproteome analysis.</title>
        <authorList>
            <person name="Albuquerque C.P."/>
            <person name="Smolka M.B."/>
            <person name="Payne S.H."/>
            <person name="Bafna V."/>
            <person name="Eng J."/>
            <person name="Zhou H."/>
        </authorList>
    </citation>
    <scope>PHOSPHORYLATION [LARGE SCALE ANALYSIS] AT SER-486</scope>
    <scope>IDENTIFICATION BY MASS SPECTROMETRY [LARGE SCALE ANALYSIS]</scope>
</reference>
<reference key="10">
    <citation type="journal article" date="2009" name="Mol. Syst. Biol.">
        <title>Global analysis of the glycoproteome in Saccharomyces cerevisiae reveals new roles for protein glycosylation in eukaryotes.</title>
        <authorList>
            <person name="Kung L.A."/>
            <person name="Tao S.-C."/>
            <person name="Qian J."/>
            <person name="Smith M.G."/>
            <person name="Snyder M."/>
            <person name="Zhu H."/>
        </authorList>
    </citation>
    <scope>GLYCOSYLATION [LARGE SCALE ANALYSIS]</scope>
</reference>
<reference key="11">
    <citation type="journal article" date="2009" name="Science">
        <title>Global analysis of Cdk1 substrate phosphorylation sites provides insights into evolution.</title>
        <authorList>
            <person name="Holt L.J."/>
            <person name="Tuch B.B."/>
            <person name="Villen J."/>
            <person name="Johnson A.D."/>
            <person name="Gygi S.P."/>
            <person name="Morgan D.O."/>
        </authorList>
    </citation>
    <scope>PHOSPHORYLATION [LARGE SCALE ANALYSIS] AT SER-177; SER-184; SER-185 AND SER-486</scope>
    <scope>IDENTIFICATION BY MASS SPECTROMETRY [LARGE SCALE ANALYSIS]</scope>
</reference>
<name>KRI1_YEAST</name>
<keyword id="KW-0325">Glycoprotein</keyword>
<keyword id="KW-0539">Nucleus</keyword>
<keyword id="KW-0597">Phosphoprotein</keyword>
<keyword id="KW-1185">Reference proteome</keyword>
<keyword id="KW-0690">Ribosome biogenesis</keyword>
<keyword id="KW-0698">rRNA processing</keyword>
<proteinExistence type="evidence at protein level"/>
<accession>P42846</accession>
<accession>D6W0N7</accession>
<feature type="chain" id="PRO_0000203368" description="Protein KRI1">
    <location>
        <begin position="1"/>
        <end position="591"/>
    </location>
</feature>
<feature type="region of interest" description="Disordered" evidence="1">
    <location>
        <begin position="1"/>
        <end position="70"/>
    </location>
</feature>
<feature type="region of interest" description="Disordered" evidence="1">
    <location>
        <begin position="142"/>
        <end position="213"/>
    </location>
</feature>
<feature type="region of interest" description="Disordered" evidence="1">
    <location>
        <begin position="281"/>
        <end position="303"/>
    </location>
</feature>
<feature type="region of interest" description="Disordered" evidence="1">
    <location>
        <begin position="375"/>
        <end position="442"/>
    </location>
</feature>
<feature type="region of interest" description="Disordered" evidence="1">
    <location>
        <begin position="454"/>
        <end position="478"/>
    </location>
</feature>
<feature type="region of interest" description="Disordered" evidence="1">
    <location>
        <begin position="548"/>
        <end position="591"/>
    </location>
</feature>
<feature type="compositionally biased region" description="Basic and acidic residues" evidence="1">
    <location>
        <begin position="10"/>
        <end position="19"/>
    </location>
</feature>
<feature type="compositionally biased region" description="Polar residues" evidence="1">
    <location>
        <begin position="25"/>
        <end position="38"/>
    </location>
</feature>
<feature type="compositionally biased region" description="Acidic residues" evidence="1">
    <location>
        <begin position="52"/>
        <end position="70"/>
    </location>
</feature>
<feature type="compositionally biased region" description="Acidic residues" evidence="1">
    <location>
        <begin position="177"/>
        <end position="190"/>
    </location>
</feature>
<feature type="compositionally biased region" description="Basic and acidic residues" evidence="1">
    <location>
        <begin position="191"/>
        <end position="206"/>
    </location>
</feature>
<feature type="compositionally biased region" description="Acidic residues" evidence="1">
    <location>
        <begin position="383"/>
        <end position="418"/>
    </location>
</feature>
<feature type="compositionally biased region" description="Basic and acidic residues" evidence="1">
    <location>
        <begin position="464"/>
        <end position="478"/>
    </location>
</feature>
<feature type="compositionally biased region" description="Basic residues" evidence="1">
    <location>
        <begin position="574"/>
        <end position="591"/>
    </location>
</feature>
<feature type="modified residue" description="Phosphoserine" evidence="8 10">
    <location>
        <position position="177"/>
    </location>
</feature>
<feature type="modified residue" description="Phosphoserine" evidence="8 10">
    <location>
        <position position="184"/>
    </location>
</feature>
<feature type="modified residue" description="Phosphoserine" evidence="8 10">
    <location>
        <position position="185"/>
    </location>
</feature>
<feature type="modified residue" description="Phosphoserine" evidence="7 8 9 10">
    <location>
        <position position="486"/>
    </location>
</feature>
<gene>
    <name type="primary">KRI1</name>
    <name type="ordered locus">YNL308C</name>
    <name type="ORF">N0388</name>
</gene>
<comment type="function">
    <text evidence="2">Required for 40S ribosome biogenesis. Involved in nucleolar processing of pre-18S ribosomal RNA.</text>
</comment>
<comment type="subunit">
    <text evidence="2">Interacts with KRR1.</text>
</comment>
<comment type="interaction">
    <interactant intactId="EBI-28360">
        <id>P42846</id>
    </interactant>
    <interactant intactId="EBI-21773">
        <id>P25586</id>
        <label>KRR1</label>
    </interactant>
    <organismsDiffer>false</organismsDiffer>
    <experiments>3</experiments>
</comment>
<comment type="subcellular location">
    <subcellularLocation>
        <location evidence="2 3">Nucleus</location>
        <location evidence="2 3">Nucleolus</location>
    </subcellularLocation>
</comment>
<comment type="PTM">
    <text evidence="5">N-glycosylated.</text>
</comment>
<comment type="miscellaneous">
    <text evidence="4">Present with 1780 molecules/cell in log phase SD medium.</text>
</comment>
<comment type="similarity">
    <text evidence="6">Belongs to the KRI1 family.</text>
</comment>
<organism>
    <name type="scientific">Saccharomyces cerevisiae (strain ATCC 204508 / S288c)</name>
    <name type="common">Baker's yeast</name>
    <dbReference type="NCBI Taxonomy" id="559292"/>
    <lineage>
        <taxon>Eukaryota</taxon>
        <taxon>Fungi</taxon>
        <taxon>Dikarya</taxon>
        <taxon>Ascomycota</taxon>
        <taxon>Saccharomycotina</taxon>
        <taxon>Saccharomycetes</taxon>
        <taxon>Saccharomycetales</taxon>
        <taxon>Saccharomycetaceae</taxon>
        <taxon>Saccharomyces</taxon>
    </lineage>
</organism>